<protein>
    <recommendedName>
        <fullName evidence="1">ATP-dependent Clp protease ATP-binding subunit ClpX</fullName>
    </recommendedName>
</protein>
<proteinExistence type="inferred from homology"/>
<comment type="function">
    <text evidence="1">ATP-dependent specificity component of the Clp protease. It directs the protease to specific substrates. Can perform chaperone functions in the absence of ClpP.</text>
</comment>
<comment type="subunit">
    <text evidence="1">Component of the ClpX-ClpP complex. Forms a hexameric ring that, in the presence of ATP, binds to fourteen ClpP subunits assembled into a disk-like structure with a central cavity, resembling the structure of eukaryotic proteasomes.</text>
</comment>
<comment type="similarity">
    <text evidence="1">Belongs to the ClpX chaperone family.</text>
</comment>
<sequence length="426" mass="46992">MTDTRNGEDNGKLLYCSFCGKSQHEVRKLIAGPSVFICDECVDLCNDIIREEVQEAQAESSGHKLPAPKEIRTILDQYVIGQERAKKVLAVAVYNHYKRLNQRDKKDDIELGKSNILMIGPTGSGKTLLAETLARLLNVPFTIADATTLTEAGYVGEDVENIIQKLLQKCDYDVEKAQMGIVYIDEIDKISRKSDNPSITRDVSGEGVQQALLKLIEGTVASVPPQGGRKHPQQEFLQVDTRNILFICGGAFAGLERVIQNRSARGGIGFNAEVRSQEMGKKVGEAFKEVEPEDLVKFGLIPEFVGRLPVIATLDELDEAALMQILTEPKNALTKQYAKLFEMEGVDLEFRPDALKAVARKALERKTGARGLRSILEGILLDTMYEIPSQQDVSKVVIDESVIDGSSQPLMIYENSEKPAKAAPEA</sequence>
<keyword id="KW-0067">ATP-binding</keyword>
<keyword id="KW-0143">Chaperone</keyword>
<keyword id="KW-0479">Metal-binding</keyword>
<keyword id="KW-0547">Nucleotide-binding</keyword>
<keyword id="KW-0862">Zinc</keyword>
<gene>
    <name evidence="1" type="primary">clpX</name>
    <name type="ordered locus">PLES_35251</name>
</gene>
<feature type="chain" id="PRO_1000118376" description="ATP-dependent Clp protease ATP-binding subunit ClpX">
    <location>
        <begin position="1"/>
        <end position="426"/>
    </location>
</feature>
<feature type="domain" description="ClpX-type ZB" evidence="2">
    <location>
        <begin position="4"/>
        <end position="57"/>
    </location>
</feature>
<feature type="binding site" evidence="2">
    <location>
        <position position="16"/>
    </location>
    <ligand>
        <name>Zn(2+)</name>
        <dbReference type="ChEBI" id="CHEBI:29105"/>
    </ligand>
</feature>
<feature type="binding site" evidence="2">
    <location>
        <position position="19"/>
    </location>
    <ligand>
        <name>Zn(2+)</name>
        <dbReference type="ChEBI" id="CHEBI:29105"/>
    </ligand>
</feature>
<feature type="binding site" evidence="2">
    <location>
        <position position="38"/>
    </location>
    <ligand>
        <name>Zn(2+)</name>
        <dbReference type="ChEBI" id="CHEBI:29105"/>
    </ligand>
</feature>
<feature type="binding site" evidence="2">
    <location>
        <position position="41"/>
    </location>
    <ligand>
        <name>Zn(2+)</name>
        <dbReference type="ChEBI" id="CHEBI:29105"/>
    </ligand>
</feature>
<feature type="binding site" evidence="1">
    <location>
        <begin position="121"/>
        <end position="128"/>
    </location>
    <ligand>
        <name>ATP</name>
        <dbReference type="ChEBI" id="CHEBI:30616"/>
    </ligand>
</feature>
<evidence type="ECO:0000255" key="1">
    <source>
        <dbReference type="HAMAP-Rule" id="MF_00175"/>
    </source>
</evidence>
<evidence type="ECO:0000255" key="2">
    <source>
        <dbReference type="PROSITE-ProRule" id="PRU01250"/>
    </source>
</evidence>
<accession>B7VB75</accession>
<organism>
    <name type="scientific">Pseudomonas aeruginosa (strain LESB58)</name>
    <dbReference type="NCBI Taxonomy" id="557722"/>
    <lineage>
        <taxon>Bacteria</taxon>
        <taxon>Pseudomonadati</taxon>
        <taxon>Pseudomonadota</taxon>
        <taxon>Gammaproteobacteria</taxon>
        <taxon>Pseudomonadales</taxon>
        <taxon>Pseudomonadaceae</taxon>
        <taxon>Pseudomonas</taxon>
    </lineage>
</organism>
<reference key="1">
    <citation type="journal article" date="2009" name="Genome Res.">
        <title>Newly introduced genomic prophage islands are critical determinants of in vivo competitiveness in the Liverpool epidemic strain of Pseudomonas aeruginosa.</title>
        <authorList>
            <person name="Winstanley C."/>
            <person name="Langille M.G.I."/>
            <person name="Fothergill J.L."/>
            <person name="Kukavica-Ibrulj I."/>
            <person name="Paradis-Bleau C."/>
            <person name="Sanschagrin F."/>
            <person name="Thomson N.R."/>
            <person name="Winsor G.L."/>
            <person name="Quail M.A."/>
            <person name="Lennard N."/>
            <person name="Bignell A."/>
            <person name="Clarke L."/>
            <person name="Seeger K."/>
            <person name="Saunders D."/>
            <person name="Harris D."/>
            <person name="Parkhill J."/>
            <person name="Hancock R.E.W."/>
            <person name="Brinkman F.S.L."/>
            <person name="Levesque R.C."/>
        </authorList>
    </citation>
    <scope>NUCLEOTIDE SEQUENCE [LARGE SCALE GENOMIC DNA]</scope>
    <source>
        <strain>LESB58</strain>
    </source>
</reference>
<name>CLPX_PSEA8</name>
<dbReference type="EMBL" id="FM209186">
    <property type="protein sequence ID" value="CAW28252.1"/>
    <property type="molecule type" value="Genomic_DNA"/>
</dbReference>
<dbReference type="RefSeq" id="WP_003087924.1">
    <property type="nucleotide sequence ID" value="NC_011770.1"/>
</dbReference>
<dbReference type="SMR" id="B7VB75"/>
<dbReference type="GeneID" id="77221608"/>
<dbReference type="KEGG" id="pag:PLES_35251"/>
<dbReference type="HOGENOM" id="CLU_014218_8_2_6"/>
<dbReference type="GO" id="GO:0009376">
    <property type="term" value="C:HslUV protease complex"/>
    <property type="evidence" value="ECO:0007669"/>
    <property type="project" value="TreeGrafter"/>
</dbReference>
<dbReference type="GO" id="GO:0005524">
    <property type="term" value="F:ATP binding"/>
    <property type="evidence" value="ECO:0007669"/>
    <property type="project" value="UniProtKB-UniRule"/>
</dbReference>
<dbReference type="GO" id="GO:0016887">
    <property type="term" value="F:ATP hydrolysis activity"/>
    <property type="evidence" value="ECO:0007669"/>
    <property type="project" value="InterPro"/>
</dbReference>
<dbReference type="GO" id="GO:0140662">
    <property type="term" value="F:ATP-dependent protein folding chaperone"/>
    <property type="evidence" value="ECO:0007669"/>
    <property type="project" value="InterPro"/>
</dbReference>
<dbReference type="GO" id="GO:0046983">
    <property type="term" value="F:protein dimerization activity"/>
    <property type="evidence" value="ECO:0007669"/>
    <property type="project" value="InterPro"/>
</dbReference>
<dbReference type="GO" id="GO:0051082">
    <property type="term" value="F:unfolded protein binding"/>
    <property type="evidence" value="ECO:0007669"/>
    <property type="project" value="UniProtKB-UniRule"/>
</dbReference>
<dbReference type="GO" id="GO:0008270">
    <property type="term" value="F:zinc ion binding"/>
    <property type="evidence" value="ECO:0007669"/>
    <property type="project" value="InterPro"/>
</dbReference>
<dbReference type="GO" id="GO:0051301">
    <property type="term" value="P:cell division"/>
    <property type="evidence" value="ECO:0007669"/>
    <property type="project" value="TreeGrafter"/>
</dbReference>
<dbReference type="GO" id="GO:0051603">
    <property type="term" value="P:proteolysis involved in protein catabolic process"/>
    <property type="evidence" value="ECO:0007669"/>
    <property type="project" value="TreeGrafter"/>
</dbReference>
<dbReference type="CDD" id="cd19497">
    <property type="entry name" value="RecA-like_ClpX"/>
    <property type="match status" value="1"/>
</dbReference>
<dbReference type="FunFam" id="1.10.8.60:FF:000002">
    <property type="entry name" value="ATP-dependent Clp protease ATP-binding subunit ClpX"/>
    <property type="match status" value="1"/>
</dbReference>
<dbReference type="FunFam" id="3.40.50.300:FF:000005">
    <property type="entry name" value="ATP-dependent Clp protease ATP-binding subunit ClpX"/>
    <property type="match status" value="1"/>
</dbReference>
<dbReference type="Gene3D" id="1.10.8.60">
    <property type="match status" value="1"/>
</dbReference>
<dbReference type="Gene3D" id="6.20.220.10">
    <property type="entry name" value="ClpX chaperone, C4-type zinc finger domain"/>
    <property type="match status" value="1"/>
</dbReference>
<dbReference type="Gene3D" id="3.40.50.300">
    <property type="entry name" value="P-loop containing nucleotide triphosphate hydrolases"/>
    <property type="match status" value="1"/>
</dbReference>
<dbReference type="HAMAP" id="MF_00175">
    <property type="entry name" value="ClpX"/>
    <property type="match status" value="1"/>
</dbReference>
<dbReference type="InterPro" id="IPR003593">
    <property type="entry name" value="AAA+_ATPase"/>
</dbReference>
<dbReference type="InterPro" id="IPR050052">
    <property type="entry name" value="ATP-dep_Clp_protease_ClpX"/>
</dbReference>
<dbReference type="InterPro" id="IPR003959">
    <property type="entry name" value="ATPase_AAA_core"/>
</dbReference>
<dbReference type="InterPro" id="IPR019489">
    <property type="entry name" value="Clp_ATPase_C"/>
</dbReference>
<dbReference type="InterPro" id="IPR004487">
    <property type="entry name" value="Clp_protease_ATP-bd_su_ClpX"/>
</dbReference>
<dbReference type="InterPro" id="IPR046425">
    <property type="entry name" value="ClpX_bact"/>
</dbReference>
<dbReference type="InterPro" id="IPR027417">
    <property type="entry name" value="P-loop_NTPase"/>
</dbReference>
<dbReference type="InterPro" id="IPR010603">
    <property type="entry name" value="Znf_CppX_C4"/>
</dbReference>
<dbReference type="InterPro" id="IPR038366">
    <property type="entry name" value="Znf_CppX_C4_sf"/>
</dbReference>
<dbReference type="NCBIfam" id="TIGR00382">
    <property type="entry name" value="clpX"/>
    <property type="match status" value="1"/>
</dbReference>
<dbReference type="NCBIfam" id="NF003745">
    <property type="entry name" value="PRK05342.1"/>
    <property type="match status" value="1"/>
</dbReference>
<dbReference type="PANTHER" id="PTHR48102:SF7">
    <property type="entry name" value="ATP-DEPENDENT CLP PROTEASE ATP-BINDING SUBUNIT CLPX-LIKE, MITOCHONDRIAL"/>
    <property type="match status" value="1"/>
</dbReference>
<dbReference type="PANTHER" id="PTHR48102">
    <property type="entry name" value="ATP-DEPENDENT CLP PROTEASE ATP-BINDING SUBUNIT CLPX-LIKE, MITOCHONDRIAL-RELATED"/>
    <property type="match status" value="1"/>
</dbReference>
<dbReference type="Pfam" id="PF07724">
    <property type="entry name" value="AAA_2"/>
    <property type="match status" value="1"/>
</dbReference>
<dbReference type="Pfam" id="PF10431">
    <property type="entry name" value="ClpB_D2-small"/>
    <property type="match status" value="1"/>
</dbReference>
<dbReference type="Pfam" id="PF06689">
    <property type="entry name" value="zf-C4_ClpX"/>
    <property type="match status" value="1"/>
</dbReference>
<dbReference type="SMART" id="SM00382">
    <property type="entry name" value="AAA"/>
    <property type="match status" value="1"/>
</dbReference>
<dbReference type="SMART" id="SM01086">
    <property type="entry name" value="ClpB_D2-small"/>
    <property type="match status" value="1"/>
</dbReference>
<dbReference type="SMART" id="SM00994">
    <property type="entry name" value="zf-C4_ClpX"/>
    <property type="match status" value="1"/>
</dbReference>
<dbReference type="SUPFAM" id="SSF57716">
    <property type="entry name" value="Glucocorticoid receptor-like (DNA-binding domain)"/>
    <property type="match status" value="1"/>
</dbReference>
<dbReference type="SUPFAM" id="SSF52540">
    <property type="entry name" value="P-loop containing nucleoside triphosphate hydrolases"/>
    <property type="match status" value="1"/>
</dbReference>
<dbReference type="PROSITE" id="PS51902">
    <property type="entry name" value="CLPX_ZB"/>
    <property type="match status" value="1"/>
</dbReference>